<organism>
    <name type="scientific">Escherichia coli (strain K12)</name>
    <dbReference type="NCBI Taxonomy" id="83333"/>
    <lineage>
        <taxon>Bacteria</taxon>
        <taxon>Pseudomonadati</taxon>
        <taxon>Pseudomonadota</taxon>
        <taxon>Gammaproteobacteria</taxon>
        <taxon>Enterobacterales</taxon>
        <taxon>Enterobacteriaceae</taxon>
        <taxon>Escherichia</taxon>
    </lineage>
</organism>
<reference key="1">
    <citation type="journal article" date="1989" name="J. Bacteriol.">
        <title>Nucleotide sequences of the fecBCDE genes and locations of the proteins suggest a periplasmic-binding-protein-dependent transport mechanism for iron(III) dicitrate in Escherichia coli.</title>
        <authorList>
            <person name="Staudenmaier H."/>
            <person name="van Hove B."/>
            <person name="Yaraghi Z."/>
            <person name="Braun V."/>
        </authorList>
    </citation>
    <scope>NUCLEOTIDE SEQUENCE [GENOMIC DNA]</scope>
    <scope>FUNCTION</scope>
    <scope>SUBUNIT</scope>
    <scope>SUBCELLULAR LOCATION</scope>
    <source>
        <strain>K12</strain>
    </source>
</reference>
<reference key="2">
    <citation type="journal article" date="1995" name="Nucleic Acids Res.">
        <title>Analysis of the Escherichia coli genome VI: DNA sequence of the region from 92.8 through 100 minutes.</title>
        <authorList>
            <person name="Burland V.D."/>
            <person name="Plunkett G. III"/>
            <person name="Sofia H.J."/>
            <person name="Daniels D.L."/>
            <person name="Blattner F.R."/>
        </authorList>
    </citation>
    <scope>NUCLEOTIDE SEQUENCE [LARGE SCALE GENOMIC DNA]</scope>
    <source>
        <strain>K12 / MG1655 / ATCC 47076</strain>
    </source>
</reference>
<reference key="3">
    <citation type="journal article" date="1997" name="Science">
        <title>The complete genome sequence of Escherichia coli K-12.</title>
        <authorList>
            <person name="Blattner F.R."/>
            <person name="Plunkett G. III"/>
            <person name="Bloch C.A."/>
            <person name="Perna N.T."/>
            <person name="Burland V."/>
            <person name="Riley M."/>
            <person name="Collado-Vides J."/>
            <person name="Glasner J.D."/>
            <person name="Rode C.K."/>
            <person name="Mayhew G.F."/>
            <person name="Gregor J."/>
            <person name="Davis N.W."/>
            <person name="Kirkpatrick H.A."/>
            <person name="Goeden M.A."/>
            <person name="Rose D.J."/>
            <person name="Mau B."/>
            <person name="Shao Y."/>
        </authorList>
    </citation>
    <scope>NUCLEOTIDE SEQUENCE [LARGE SCALE GENOMIC DNA]</scope>
    <source>
        <strain>K12 / MG1655 / ATCC 47076</strain>
    </source>
</reference>
<reference key="4">
    <citation type="journal article" date="2006" name="Mol. Syst. Biol.">
        <title>Highly accurate genome sequences of Escherichia coli K-12 strains MG1655 and W3110.</title>
        <authorList>
            <person name="Hayashi K."/>
            <person name="Morooka N."/>
            <person name="Yamamoto Y."/>
            <person name="Fujita K."/>
            <person name="Isono K."/>
            <person name="Choi S."/>
            <person name="Ohtsubo E."/>
            <person name="Baba T."/>
            <person name="Wanner B.L."/>
            <person name="Mori H."/>
            <person name="Horiuchi T."/>
        </authorList>
    </citation>
    <scope>NUCLEOTIDE SEQUENCE [LARGE SCALE GENOMIC DNA]</scope>
    <source>
        <strain>K12 / W3110 / ATCC 27325 / DSM 5911</strain>
    </source>
</reference>
<reference key="5">
    <citation type="journal article" date="2005" name="Science">
        <title>Global topology analysis of the Escherichia coli inner membrane proteome.</title>
        <authorList>
            <person name="Daley D.O."/>
            <person name="Rapp M."/>
            <person name="Granseth E."/>
            <person name="Melen K."/>
            <person name="Drew D."/>
            <person name="von Heijne G."/>
        </authorList>
    </citation>
    <scope>TOPOLOGY [LARGE SCALE ANALYSIS]</scope>
    <scope>SUBCELLULAR LOCATION</scope>
    <source>
        <strain>K12 / MG1655 / ATCC 47076</strain>
    </source>
</reference>
<reference key="6">
    <citation type="journal article" date="2007" name="J. Bacteriol.">
        <title>Docking of the periplasmic FecB binding protein to the FecCD transmembrane proteins in the ferric citrate transport system of Escherichia coli.</title>
        <authorList>
            <person name="Braun V."/>
            <person name="Herrmann C."/>
        </authorList>
    </citation>
    <scope>FUNCTION</scope>
    <scope>INTERACTION WITH FECB</scope>
    <scope>MUTAGENESIS OF ARG-51; ARG-54 AND ARG-288</scope>
    <source>
        <strain>K12</strain>
    </source>
</reference>
<reference key="7">
    <citation type="journal article" date="2009" name="Mol. Cell">
        <title>Hydroxyurea induces hydroxyl radical-mediated cell death in Escherichia coli.</title>
        <authorList>
            <person name="Davies B.W."/>
            <person name="Kohanski M.A."/>
            <person name="Simmons L.A."/>
            <person name="Winkler J.A."/>
            <person name="Collins J.J."/>
            <person name="Walker G.C."/>
        </authorList>
    </citation>
    <scope>INDUCTION BY HYDROXYUREA</scope>
    <source>
        <strain>K12 / MC4100 / ATCC 35695 / DSM 6574</strain>
    </source>
</reference>
<sequence>MKIALVIFITLALAGCALLSLHMGVIPVPWRALLTDWQAGHEHYYVLMEYRLPRLLLALFVGAALAVAGVLIQGIVRNPLASPDILGVNHAASLASVGALLLMPSLPVMVLPLLAFAGGMAGLILLKMLAKTHQPMKLALTGVALSACWASLTDYLMLSRPQDVNNALLWLTGSLWGRDWSFVKIAIPLMILFLPLSLSFCRDLDLLALGDARATTLGVSVPHTRFWALLLAVAMTSTGVAACGPISFIGLVVPHMMRSITGGRHRRLLPVSALTGALLLVVADLLARIIHPPLELPVGVLTAIIGAPWFVWLLVRMR</sequence>
<feature type="chain" id="PRO_0000060021" description="Fe(3+) dicitrate transport system permease protein FecD">
    <location>
        <begin position="1"/>
        <end position="318"/>
    </location>
</feature>
<feature type="topological domain" description="Cytoplasmic" evidence="7">
    <location>
        <begin position="1"/>
        <end position="2"/>
    </location>
</feature>
<feature type="transmembrane region" description="Helical" evidence="1">
    <location>
        <begin position="3"/>
        <end position="23"/>
    </location>
</feature>
<feature type="topological domain" description="Periplasmic" evidence="7">
    <location>
        <begin position="24"/>
        <end position="55"/>
    </location>
</feature>
<feature type="transmembrane region" description="Helical" evidence="1">
    <location>
        <begin position="56"/>
        <end position="76"/>
    </location>
</feature>
<feature type="topological domain" description="Cytoplasmic" evidence="7">
    <location>
        <begin position="77"/>
        <end position="105"/>
    </location>
</feature>
<feature type="transmembrane region" description="Helical" evidence="1">
    <location>
        <begin position="106"/>
        <end position="126"/>
    </location>
</feature>
<feature type="topological domain" description="Periplasmic" evidence="7">
    <location>
        <begin position="127"/>
        <end position="137"/>
    </location>
</feature>
<feature type="transmembrane region" description="Helical" evidence="1">
    <location>
        <begin position="138"/>
        <end position="158"/>
    </location>
</feature>
<feature type="topological domain" description="Cytoplasmic" evidence="7">
    <location>
        <begin position="159"/>
        <end position="179"/>
    </location>
</feature>
<feature type="transmembrane region" description="Helical" evidence="1">
    <location>
        <begin position="180"/>
        <end position="200"/>
    </location>
</feature>
<feature type="topological domain" description="Periplasmic" evidence="7">
    <location>
        <begin position="201"/>
        <end position="225"/>
    </location>
</feature>
<feature type="transmembrane region" description="Helical" evidence="1">
    <location>
        <begin position="226"/>
        <end position="246"/>
    </location>
</feature>
<feature type="topological domain" description="Cytoplasmic" evidence="7">
    <location>
        <begin position="247"/>
        <end position="269"/>
    </location>
</feature>
<feature type="transmembrane region" description="Helical" evidence="1">
    <location>
        <begin position="270"/>
        <end position="290"/>
    </location>
</feature>
<feature type="topological domain" description="Periplasmic" evidence="7">
    <location>
        <begin position="291"/>
        <end position="294"/>
    </location>
</feature>
<feature type="transmembrane region" description="Helical" evidence="1">
    <location>
        <begin position="295"/>
        <end position="315"/>
    </location>
</feature>
<feature type="topological domain" description="Cytoplasmic" evidence="2">
    <location>
        <begin position="316"/>
        <end position="318"/>
    </location>
</feature>
<feature type="mutagenesis site" description="Retains 32% of wild-type citrate-mediated Fe(3+) transport." evidence="3">
    <original>R</original>
    <variation>C</variation>
    <location>
        <position position="51"/>
    </location>
</feature>
<feature type="mutagenesis site" description="Retains 14% of wild-type citrate-mediated Fe(3+) transport." evidence="3">
    <original>R</original>
    <variation>E</variation>
    <location>
        <position position="51"/>
    </location>
</feature>
<feature type="mutagenesis site" description="Retains 19% of wild-type citrate-mediated Fe(3+) transport." evidence="3">
    <original>R</original>
    <variation>C</variation>
    <location>
        <position position="54"/>
    </location>
</feature>
<feature type="mutagenesis site" description="Retains 24% of wild-type citrate-mediated Fe(3+) transport." evidence="3">
    <original>R</original>
    <variation>E</variation>
    <location>
        <position position="54"/>
    </location>
</feature>
<feature type="mutagenesis site" description="Retains 65% of wild-type citrate-mediated Fe(3+) transport." evidence="3">
    <original>R</original>
    <variation>C</variation>
    <location>
        <position position="288"/>
    </location>
</feature>
<feature type="mutagenesis site" description="Retains 35% of wild-type citrate-mediated Fe(3+) transport." evidence="3">
    <original>R</original>
    <variation>E</variation>
    <location>
        <position position="288"/>
    </location>
</feature>
<feature type="sequence conflict" description="In Ref. 1; AAA23764." evidence="7" ref="1">
    <original>H</original>
    <variation>R</variation>
    <location>
        <position position="41"/>
    </location>
</feature>
<evidence type="ECO:0000255" key="1"/>
<evidence type="ECO:0000269" key="2">
    <source>
    </source>
</evidence>
<evidence type="ECO:0000269" key="3">
    <source>
    </source>
</evidence>
<evidence type="ECO:0000269" key="4">
    <source>
    </source>
</evidence>
<evidence type="ECO:0000269" key="5">
    <source>
    </source>
</evidence>
<evidence type="ECO:0000303" key="6">
    <source>
    </source>
</evidence>
<evidence type="ECO:0000305" key="7"/>
<name>FECD_ECOLI</name>
<accession>P15029</accession>
<accession>Q2M627</accession>
<gene>
    <name evidence="6" type="primary">fecD</name>
    <name type="ordered locus">b4288</name>
    <name type="ordered locus">JW4248</name>
</gene>
<protein>
    <recommendedName>
        <fullName evidence="7">Fe(3+) dicitrate transport system permease protein FecD</fullName>
    </recommendedName>
    <alternativeName>
        <fullName>Iron(III) dicitrate transport system permease protein FecD</fullName>
    </alternativeName>
</protein>
<keyword id="KW-0997">Cell inner membrane</keyword>
<keyword id="KW-1003">Cell membrane</keyword>
<keyword id="KW-0406">Ion transport</keyword>
<keyword id="KW-0408">Iron</keyword>
<keyword id="KW-0410">Iron transport</keyword>
<keyword id="KW-0472">Membrane</keyword>
<keyword id="KW-1185">Reference proteome</keyword>
<keyword id="KW-0812">Transmembrane</keyword>
<keyword id="KW-1133">Transmembrane helix</keyword>
<keyword id="KW-0813">Transport</keyword>
<proteinExistence type="evidence at protein level"/>
<dbReference type="EMBL" id="M26397">
    <property type="protein sequence ID" value="AAA23764.1"/>
    <property type="molecule type" value="Genomic_DNA"/>
</dbReference>
<dbReference type="EMBL" id="U14003">
    <property type="protein sequence ID" value="AAA97184.1"/>
    <property type="molecule type" value="Genomic_DNA"/>
</dbReference>
<dbReference type="EMBL" id="U00096">
    <property type="protein sequence ID" value="AAC77244.1"/>
    <property type="molecule type" value="Genomic_DNA"/>
</dbReference>
<dbReference type="EMBL" id="AP009048">
    <property type="protein sequence ID" value="BAE78279.1"/>
    <property type="molecule type" value="Genomic_DNA"/>
</dbReference>
<dbReference type="PIR" id="S56513">
    <property type="entry name" value="QRECD2"/>
</dbReference>
<dbReference type="RefSeq" id="NP_418708.1">
    <property type="nucleotide sequence ID" value="NC_000913.3"/>
</dbReference>
<dbReference type="RefSeq" id="WP_000684852.1">
    <property type="nucleotide sequence ID" value="NZ_LN832404.1"/>
</dbReference>
<dbReference type="SMR" id="P15029"/>
<dbReference type="BioGRID" id="4262740">
    <property type="interactions" value="325"/>
</dbReference>
<dbReference type="ComplexPortal" id="CPX-4403">
    <property type="entry name" value="Ferric-citrate ABC transporter complex"/>
</dbReference>
<dbReference type="FunCoup" id="P15029">
    <property type="interactions" value="413"/>
</dbReference>
<dbReference type="STRING" id="511145.b4288"/>
<dbReference type="TCDB" id="3.A.1.14.1">
    <property type="family name" value="the atp-binding cassette (abc) superfamily"/>
</dbReference>
<dbReference type="PaxDb" id="511145-b4288"/>
<dbReference type="EnsemblBacteria" id="AAC77244">
    <property type="protein sequence ID" value="AAC77244"/>
    <property type="gene ID" value="b4288"/>
</dbReference>
<dbReference type="GeneID" id="946816"/>
<dbReference type="KEGG" id="ecj:JW4248"/>
<dbReference type="KEGG" id="eco:b4288"/>
<dbReference type="KEGG" id="ecoc:C3026_23125"/>
<dbReference type="PATRIC" id="fig|1411691.4.peg.2411"/>
<dbReference type="EchoBASE" id="EB0285"/>
<dbReference type="eggNOG" id="COG0609">
    <property type="taxonomic scope" value="Bacteria"/>
</dbReference>
<dbReference type="HOGENOM" id="CLU_013016_1_1_6"/>
<dbReference type="InParanoid" id="P15029"/>
<dbReference type="OMA" id="DHQIIWH"/>
<dbReference type="OrthoDB" id="9055647at2"/>
<dbReference type="PhylomeDB" id="P15029"/>
<dbReference type="BioCyc" id="EcoCyc:FECD-MONOMER"/>
<dbReference type="BioCyc" id="MetaCyc:FECD-MONOMER"/>
<dbReference type="PHI-base" id="PHI:11753"/>
<dbReference type="PHI-base" id="PHI:8009"/>
<dbReference type="PRO" id="PR:P15029"/>
<dbReference type="Proteomes" id="UP000000625">
    <property type="component" value="Chromosome"/>
</dbReference>
<dbReference type="GO" id="GO:0055052">
    <property type="term" value="C:ATP-binding cassette (ABC) transporter complex, substrate-binding subunit-containing"/>
    <property type="evidence" value="ECO:0000303"/>
    <property type="project" value="ComplexPortal"/>
</dbReference>
<dbReference type="GO" id="GO:0016020">
    <property type="term" value="C:membrane"/>
    <property type="evidence" value="ECO:0000303"/>
    <property type="project" value="ComplexPortal"/>
</dbReference>
<dbReference type="GO" id="GO:0005886">
    <property type="term" value="C:plasma membrane"/>
    <property type="evidence" value="ECO:0000314"/>
    <property type="project" value="EcoCyc"/>
</dbReference>
<dbReference type="GO" id="GO:0015603">
    <property type="term" value="F:iron chelate transmembrane transporter activity"/>
    <property type="evidence" value="ECO:0000315"/>
    <property type="project" value="EcoCyc"/>
</dbReference>
<dbReference type="GO" id="GO:0022857">
    <property type="term" value="F:transmembrane transporter activity"/>
    <property type="evidence" value="ECO:0000318"/>
    <property type="project" value="GO_Central"/>
</dbReference>
<dbReference type="GO" id="GO:0006879">
    <property type="term" value="P:intracellular iron ion homeostasis"/>
    <property type="evidence" value="ECO:0000303"/>
    <property type="project" value="ComplexPortal"/>
</dbReference>
<dbReference type="GO" id="GO:0033212">
    <property type="term" value="P:iron import into cell"/>
    <property type="evidence" value="ECO:0000303"/>
    <property type="project" value="ComplexPortal"/>
</dbReference>
<dbReference type="GO" id="GO:0033214">
    <property type="term" value="P:siderophore-dependent iron import into cell"/>
    <property type="evidence" value="ECO:0000315"/>
    <property type="project" value="EcoCyc"/>
</dbReference>
<dbReference type="CDD" id="cd06550">
    <property type="entry name" value="TM_ABC_iron-siderophores_like"/>
    <property type="match status" value="1"/>
</dbReference>
<dbReference type="FunFam" id="1.10.3470.10:FF:000001">
    <property type="entry name" value="Vitamin B12 ABC transporter permease BtuC"/>
    <property type="match status" value="1"/>
</dbReference>
<dbReference type="Gene3D" id="1.10.3470.10">
    <property type="entry name" value="ABC transporter involved in vitamin B12 uptake, BtuC"/>
    <property type="match status" value="1"/>
</dbReference>
<dbReference type="InterPro" id="IPR037294">
    <property type="entry name" value="ABC_BtuC-like"/>
</dbReference>
<dbReference type="InterPro" id="IPR000522">
    <property type="entry name" value="ABC_transptr_permease_BtuC"/>
</dbReference>
<dbReference type="NCBIfam" id="NF007299">
    <property type="entry name" value="PRK09777.1"/>
    <property type="match status" value="1"/>
</dbReference>
<dbReference type="PANTHER" id="PTHR30472:SF37">
    <property type="entry name" value="FE(3+) DICITRATE TRANSPORT SYSTEM PERMEASE PROTEIN FECD-RELATED"/>
    <property type="match status" value="1"/>
</dbReference>
<dbReference type="PANTHER" id="PTHR30472">
    <property type="entry name" value="FERRIC ENTEROBACTIN TRANSPORT SYSTEM PERMEASE PROTEIN"/>
    <property type="match status" value="1"/>
</dbReference>
<dbReference type="Pfam" id="PF01032">
    <property type="entry name" value="FecCD"/>
    <property type="match status" value="1"/>
</dbReference>
<dbReference type="SUPFAM" id="SSF81345">
    <property type="entry name" value="ABC transporter involved in vitamin B12 uptake, BtuC"/>
    <property type="match status" value="1"/>
</dbReference>
<comment type="function">
    <text evidence="3 5 7">Part of the ABC transporter complex FecBCDE involved in citrate-dependent Fe(3+) uptake (PubMed:17660286, PubMed:2651410). Probably responsible for the translocation of the substrate across the membrane (Probable).</text>
</comment>
<comment type="subunit">
    <text evidence="3 5">The complex is composed of two ATP-binding proteins (FecE), two transmembrane proteins (FecC and FecD) and a solute-binding protein (FecB) (PubMed:2651410). Interacts with FecB (PubMed:17660286).</text>
</comment>
<comment type="subcellular location">
    <subcellularLocation>
        <location evidence="2 5">Cell inner membrane</location>
        <topology evidence="1">Multi-pass membrane protein</topology>
    </subcellularLocation>
</comment>
<comment type="induction">
    <text evidence="4">Induced 1.3-fold by hydroxyurea.</text>
</comment>
<comment type="similarity">
    <text evidence="7">Belongs to the binding-protein-dependent transport system permease family. FecCD subfamily.</text>
</comment>